<sequence>MSEASGRAAGNEMPAKKQKLSSDENSNPELSGDENDDSVSIESGTNTERPDTPTNAANAPGRKAWGKGKWKSKKCKYSFKCVNSLKEDHNQPLFGVQFNWHSKEGDPLVFATVGSNRVTLYECHPQGDIRLLQSYVDADADENFYTCAWTYDSNTSHPLLAVAGSRGIIRIINPITMQCIKHYVGHGNAINELKFHPRDPNLLLSVSKDHALRLWNIQTDTLVAIFGGVEGHRDEVLSADYDLLGEKIMSCGMDHSLKLWRINSLRMKTAIKESYEYNPSKTNRPFVSQKIHFPDFSTRDIHRNYVDCVRWLGDLILSKSCENAIVCWKPGKMEDDIDKIKPSESNVTILGRFDYSQCDIWYMRFSMDFWQKMLALGNQVGKLYVWDLEAEDPHKAKCTTLTYPKCASAVRQTSFSRDSSILVAVCDDATIWRWDRLR</sequence>
<name>EEDA_XENLA</name>
<organism>
    <name type="scientific">Xenopus laevis</name>
    <name type="common">African clawed frog</name>
    <dbReference type="NCBI Taxonomy" id="8355"/>
    <lineage>
        <taxon>Eukaryota</taxon>
        <taxon>Metazoa</taxon>
        <taxon>Chordata</taxon>
        <taxon>Craniata</taxon>
        <taxon>Vertebrata</taxon>
        <taxon>Euteleostomi</taxon>
        <taxon>Amphibia</taxon>
        <taxon>Batrachia</taxon>
        <taxon>Anura</taxon>
        <taxon>Pipoidea</taxon>
        <taxon>Pipidae</taxon>
        <taxon>Xenopodinae</taxon>
        <taxon>Xenopus</taxon>
        <taxon>Xenopus</taxon>
    </lineage>
</organism>
<reference key="1">
    <citation type="journal article" date="2002" name="Gene">
        <title>Identification of putative interaction partners for the Xenopus Polycomb-group protein Xeed.</title>
        <authorList>
            <person name="Showell C."/>
            <person name="Cunliffe V.T."/>
        </authorList>
    </citation>
    <scope>NUCLEOTIDE SEQUENCE [MRNA]</scope>
    <scope>INTERACTION WITH EZH2; HDAC1 AND TAF9</scope>
    <scope>DEVELOPMENTAL STAGE</scope>
    <source>
        <tissue>Gastrula</tissue>
    </source>
</reference>
<reference key="2">
    <citation type="submission" date="2005-06" db="EMBL/GenBank/DDBJ databases">
        <authorList>
            <consortium name="NIH - Xenopus Gene Collection (XGC) project"/>
        </authorList>
    </citation>
    <scope>NUCLEOTIDE SEQUENCE [LARGE SCALE MRNA]</scope>
    <source>
        <tissue>Egg</tissue>
        <tissue>Ovary</tissue>
    </source>
</reference>
<dbReference type="EMBL" id="AJ421945">
    <property type="protein sequence ID" value="CAD19130.1"/>
    <property type="molecule type" value="mRNA"/>
</dbReference>
<dbReference type="EMBL" id="BC077511">
    <property type="protein sequence ID" value="AAH77511.1"/>
    <property type="molecule type" value="mRNA"/>
</dbReference>
<dbReference type="EMBL" id="BC097778">
    <property type="protein sequence ID" value="AAH97778.1"/>
    <property type="molecule type" value="mRNA"/>
</dbReference>
<dbReference type="RefSeq" id="NP_001089517.1">
    <property type="nucleotide sequence ID" value="NM_001096048.1"/>
</dbReference>
<dbReference type="SMR" id="Q8UUP2"/>
<dbReference type="GeneID" id="734571"/>
<dbReference type="KEGG" id="xla:734571"/>
<dbReference type="AGR" id="Xenbase:XB-GENE-6255887"/>
<dbReference type="CTD" id="734571"/>
<dbReference type="Xenbase" id="XB-GENE-6255887">
    <property type="gene designation" value="eed.L"/>
</dbReference>
<dbReference type="OrthoDB" id="7318948at2759"/>
<dbReference type="Proteomes" id="UP000186698">
    <property type="component" value="Chromosome 2L"/>
</dbReference>
<dbReference type="Bgee" id="734571">
    <property type="expression patterns" value="Expressed in egg cell and 19 other cell types or tissues"/>
</dbReference>
<dbReference type="GO" id="GO:0035098">
    <property type="term" value="C:ESC/E(Z) complex"/>
    <property type="evidence" value="ECO:0000250"/>
    <property type="project" value="UniProtKB"/>
</dbReference>
<dbReference type="GO" id="GO:0031507">
    <property type="term" value="P:heterochromatin formation"/>
    <property type="evidence" value="ECO:0000318"/>
    <property type="project" value="GO_Central"/>
</dbReference>
<dbReference type="GO" id="GO:0000122">
    <property type="term" value="P:negative regulation of transcription by RNA polymerase II"/>
    <property type="evidence" value="ECO:0000318"/>
    <property type="project" value="GO_Central"/>
</dbReference>
<dbReference type="FunFam" id="2.130.10.10:FF:000056">
    <property type="entry name" value="Polycomb protein eed"/>
    <property type="match status" value="1"/>
</dbReference>
<dbReference type="Gene3D" id="2.130.10.10">
    <property type="entry name" value="YVTN repeat-like/Quinoprotein amine dehydrogenase"/>
    <property type="match status" value="1"/>
</dbReference>
<dbReference type="InterPro" id="IPR051243">
    <property type="entry name" value="PcG_WD-repeat"/>
</dbReference>
<dbReference type="InterPro" id="IPR015943">
    <property type="entry name" value="WD40/YVTN_repeat-like_dom_sf"/>
</dbReference>
<dbReference type="InterPro" id="IPR019775">
    <property type="entry name" value="WD40_repeat_CS"/>
</dbReference>
<dbReference type="InterPro" id="IPR036322">
    <property type="entry name" value="WD40_repeat_dom_sf"/>
</dbReference>
<dbReference type="InterPro" id="IPR001680">
    <property type="entry name" value="WD40_rpt"/>
</dbReference>
<dbReference type="PANTHER" id="PTHR10253">
    <property type="entry name" value="POLYCOMB PROTEIN"/>
    <property type="match status" value="1"/>
</dbReference>
<dbReference type="Pfam" id="PF00400">
    <property type="entry name" value="WD40"/>
    <property type="match status" value="2"/>
</dbReference>
<dbReference type="SMART" id="SM00320">
    <property type="entry name" value="WD40"/>
    <property type="match status" value="6"/>
</dbReference>
<dbReference type="SUPFAM" id="SSF50978">
    <property type="entry name" value="WD40 repeat-like"/>
    <property type="match status" value="1"/>
</dbReference>
<dbReference type="PROSITE" id="PS00678">
    <property type="entry name" value="WD_REPEATS_1"/>
    <property type="match status" value="1"/>
</dbReference>
<dbReference type="PROSITE" id="PS50082">
    <property type="entry name" value="WD_REPEATS_2"/>
    <property type="match status" value="2"/>
</dbReference>
<dbReference type="PROSITE" id="PS50294">
    <property type="entry name" value="WD_REPEATS_REGION"/>
    <property type="match status" value="1"/>
</dbReference>
<comment type="function">
    <text evidence="1">Polycomb group (PcG) protein. Component of the prc2/eed-ezh2 complex, which methylates 'Lys-9' and 'Lys-27' of histone H3, leading to transcriptional repression of the affected target gene (By similarity).</text>
</comment>
<comment type="subunit">
    <text evidence="1 3">Component of the prc2/eed-ezh2 complex (By similarity). Interacts with yy1 (By similarity). Can interact with ezh2, hdac1 and taf9.</text>
</comment>
<comment type="subcellular location">
    <subcellularLocation>
        <location evidence="1">Nucleus</location>
    </subcellularLocation>
</comment>
<comment type="developmental stage">
    <text evidence="3">Maternally and zygotically expressed. Expression declines at the mid-blastula transition.</text>
</comment>
<comment type="similarity">
    <text evidence="4">Belongs to the WD repeat ESC family.</text>
</comment>
<feature type="chain" id="PRO_0000343729" description="Polycomb protein eed-A">
    <location>
        <begin position="1"/>
        <end position="438"/>
    </location>
</feature>
<feature type="repeat" description="WD 1">
    <location>
        <begin position="88"/>
        <end position="131"/>
    </location>
</feature>
<feature type="repeat" description="WD 2">
    <location>
        <begin position="139"/>
        <end position="182"/>
    </location>
</feature>
<feature type="repeat" description="WD 3">
    <location>
        <begin position="185"/>
        <end position="225"/>
    </location>
</feature>
<feature type="repeat" description="WD 4">
    <location>
        <begin position="231"/>
        <end position="270"/>
    </location>
</feature>
<feature type="repeat" description="WD 5">
    <location>
        <begin position="301"/>
        <end position="338"/>
    </location>
</feature>
<feature type="repeat" description="WD 6">
    <location>
        <begin position="356"/>
        <end position="396"/>
    </location>
</feature>
<feature type="repeat" description="WD 7">
    <location>
        <begin position="405"/>
        <end position="438"/>
    </location>
</feature>
<feature type="region of interest" description="Disordered" evidence="2">
    <location>
        <begin position="1"/>
        <end position="67"/>
    </location>
</feature>
<feature type="compositionally biased region" description="Polar residues" evidence="2">
    <location>
        <begin position="40"/>
        <end position="57"/>
    </location>
</feature>
<feature type="sequence conflict" description="In Ref. 2; AAH77511." evidence="4" ref="2">
    <original>GNEM</original>
    <variation>DAWV</variation>
    <location>
        <begin position="10"/>
        <end position="13"/>
    </location>
</feature>
<keyword id="KW-0156">Chromatin regulator</keyword>
<keyword id="KW-0539">Nucleus</keyword>
<keyword id="KW-1185">Reference proteome</keyword>
<keyword id="KW-0677">Repeat</keyword>
<keyword id="KW-0678">Repressor</keyword>
<keyword id="KW-0804">Transcription</keyword>
<keyword id="KW-0805">Transcription regulation</keyword>
<keyword id="KW-0853">WD repeat</keyword>
<evidence type="ECO:0000250" key="1"/>
<evidence type="ECO:0000256" key="2">
    <source>
        <dbReference type="SAM" id="MobiDB-lite"/>
    </source>
</evidence>
<evidence type="ECO:0000269" key="3">
    <source>
    </source>
</evidence>
<evidence type="ECO:0000305" key="4"/>
<protein>
    <recommendedName>
        <fullName>Polycomb protein eed-A</fullName>
        <shortName>Xeed-A</shortName>
    </recommendedName>
</protein>
<proteinExistence type="evidence at protein level"/>
<gene>
    <name type="primary">eed-a</name>
</gene>
<accession>Q8UUP2</accession>
<accession>Q6AZP3</accession>